<organism>
    <name type="scientific">Lottia gigantea</name>
    <name type="common">Giant owl limpet</name>
    <dbReference type="NCBI Taxonomy" id="225164"/>
    <lineage>
        <taxon>Eukaryota</taxon>
        <taxon>Metazoa</taxon>
        <taxon>Spiralia</taxon>
        <taxon>Lophotrochozoa</taxon>
        <taxon>Mollusca</taxon>
        <taxon>Gastropoda</taxon>
        <taxon>Patellogastropoda</taxon>
        <taxon>Lottioidea</taxon>
        <taxon>Lottiidae</taxon>
        <taxon>Lottia</taxon>
    </lineage>
</organism>
<keyword id="KW-0903">Direct protein sequencing</keyword>
<keyword id="KW-0964">Secreted</keyword>
<keyword id="KW-0732">Signal</keyword>
<reference evidence="4" key="1">
    <citation type="submission" date="2007-12" db="EMBL/GenBank/DDBJ databases">
        <title>DOE Joint Genome Institute Lottia gigantea EST project.</title>
        <authorList>
            <person name="Richardson P."/>
            <person name="Lucas S."/>
            <person name="Rokhsar D."/>
            <person name="Wang M."/>
            <person name="Lindquist E.A."/>
        </authorList>
    </citation>
    <scope>NUCLEOTIDE SEQUENCE [LARGE SCALE MRNA]</scope>
    <scope>IDENTIFICATION</scope>
    <source>
        <tissue evidence="3">Mantle</tissue>
    </source>
</reference>
<reference key="2">
    <citation type="journal article" date="2013" name="FEBS J.">
        <title>The shell-forming proteome of Lottia gigantea reveals both deep conservations and lineage-specific novelties.</title>
        <authorList>
            <person name="Marie B."/>
            <person name="Jackson D.J."/>
            <person name="Ramos-Silva P."/>
            <person name="Zanella-Cleon I."/>
            <person name="Guichard N."/>
            <person name="Marin F."/>
        </authorList>
    </citation>
    <scope>PROTEIN SEQUENCE OF 30-40 AND 54-64</scope>
    <scope>SUBCELLULAR LOCATION</scope>
    <scope>TISSUE SPECIFICITY</scope>
    <source>
        <tissue>Shell</tissue>
    </source>
</reference>
<name>PRP2_LOTGI</name>
<proteinExistence type="evidence at protein level"/>
<protein>
    <recommendedName>
        <fullName>Proline-rich protein 2</fullName>
    </recommendedName>
    <alternativeName>
        <fullName>Uncharacterized shell protein 21</fullName>
        <shortName>LUSP-21</shortName>
    </alternativeName>
</protein>
<accession>B3A0R8</accession>
<comment type="subcellular location">
    <subcellularLocation>
        <location evidence="2">Secreted</location>
    </subcellularLocation>
</comment>
<comment type="tissue specificity">
    <text evidence="2">Component of the acid-soluble organic matrix of calcified layers of the shell (at protein level).</text>
</comment>
<evidence type="ECO:0000255" key="1"/>
<evidence type="ECO:0000269" key="2">
    <source>
    </source>
</evidence>
<evidence type="ECO:0000269" key="3">
    <source ref="1"/>
</evidence>
<evidence type="ECO:0000305" key="4"/>
<dbReference type="EMBL" id="FC624447">
    <property type="status" value="NOT_ANNOTATED_CDS"/>
    <property type="molecule type" value="mRNA"/>
</dbReference>
<dbReference type="GO" id="GO:0005576">
    <property type="term" value="C:extracellular region"/>
    <property type="evidence" value="ECO:0007669"/>
    <property type="project" value="UniProtKB-SubCell"/>
</dbReference>
<sequence>MNLKVGIAVLIIALIVPSAQPYIYRGYDRSSDPNFDMFGRSVAGDNAYRQPLRTLQSPAPMVPRAMPLQRQMYVPPRAPMIAPRVPIRAPMSPVRPGVLQTQPVMPIPYHHPHYYPGYDPPSYDPPDISQPDPPGEYFYHPRPRPNLGIYNPSRITAFNRAYLR</sequence>
<feature type="signal peptide" evidence="1">
    <location>
        <begin position="1"/>
        <end position="21"/>
    </location>
</feature>
<feature type="chain" id="PRO_0000415240" description="Proline-rich protein 2" evidence="1">
    <location>
        <begin position="22"/>
        <end position="164"/>
    </location>
</feature>